<feature type="chain" id="PRO_0000124516" description="Small ribosomal subunit protein uS7c">
    <location>
        <begin position="1"/>
        <end position="155"/>
    </location>
</feature>
<organism>
    <name type="scientific">Yucca glauca</name>
    <name type="common">Soapweed yucca</name>
    <name type="synonym">Yucca angustifolia</name>
    <dbReference type="NCBI Taxonomy" id="207936"/>
    <lineage>
        <taxon>Eukaryota</taxon>
        <taxon>Viridiplantae</taxon>
        <taxon>Streptophyta</taxon>
        <taxon>Embryophyta</taxon>
        <taxon>Tracheophyta</taxon>
        <taxon>Spermatophyta</taxon>
        <taxon>Magnoliopsida</taxon>
        <taxon>Liliopsida</taxon>
        <taxon>Asparagales</taxon>
        <taxon>Asparagaceae</taxon>
        <taxon>Agavoideae</taxon>
        <taxon>Yucca</taxon>
    </lineage>
</organism>
<keyword id="KW-0150">Chloroplast</keyword>
<keyword id="KW-0934">Plastid</keyword>
<keyword id="KW-0687">Ribonucleoprotein</keyword>
<keyword id="KW-0689">Ribosomal protein</keyword>
<keyword id="KW-0694">RNA-binding</keyword>
<keyword id="KW-0699">rRNA-binding</keyword>
<geneLocation type="chloroplast"/>
<gene>
    <name type="primary">rps7</name>
</gene>
<accession>Q67IA4</accession>
<comment type="function">
    <text evidence="1">One of the primary rRNA binding proteins, it binds directly to 16S rRNA where it nucleates assembly of the head domain of the 30S subunit.</text>
</comment>
<comment type="subunit">
    <text>Part of the 30S ribosomal subunit.</text>
</comment>
<comment type="subcellular location">
    <subcellularLocation>
        <location>Plastid</location>
        <location>Chloroplast</location>
    </subcellularLocation>
</comment>
<comment type="similarity">
    <text evidence="2">Belongs to the universal ribosomal protein uS7 family.</text>
</comment>
<protein>
    <recommendedName>
        <fullName evidence="2">Small ribosomal subunit protein uS7c</fullName>
    </recommendedName>
    <alternativeName>
        <fullName>30S ribosomal protein S7, chloroplastic</fullName>
    </alternativeName>
</protein>
<dbReference type="EMBL" id="AY147498">
    <property type="protein sequence ID" value="AAN32099.1"/>
    <property type="molecule type" value="Genomic_DNA"/>
</dbReference>
<dbReference type="SMR" id="Q67IA4"/>
<dbReference type="GO" id="GO:0009507">
    <property type="term" value="C:chloroplast"/>
    <property type="evidence" value="ECO:0007669"/>
    <property type="project" value="UniProtKB-SubCell"/>
</dbReference>
<dbReference type="GO" id="GO:0015935">
    <property type="term" value="C:small ribosomal subunit"/>
    <property type="evidence" value="ECO:0007669"/>
    <property type="project" value="InterPro"/>
</dbReference>
<dbReference type="GO" id="GO:0019843">
    <property type="term" value="F:rRNA binding"/>
    <property type="evidence" value="ECO:0007669"/>
    <property type="project" value="UniProtKB-UniRule"/>
</dbReference>
<dbReference type="GO" id="GO:0003735">
    <property type="term" value="F:structural constituent of ribosome"/>
    <property type="evidence" value="ECO:0007669"/>
    <property type="project" value="InterPro"/>
</dbReference>
<dbReference type="GO" id="GO:0006412">
    <property type="term" value="P:translation"/>
    <property type="evidence" value="ECO:0007669"/>
    <property type="project" value="UniProtKB-UniRule"/>
</dbReference>
<dbReference type="CDD" id="cd14871">
    <property type="entry name" value="uS7_Chloroplast"/>
    <property type="match status" value="1"/>
</dbReference>
<dbReference type="FunFam" id="1.10.455.10:FF:000001">
    <property type="entry name" value="30S ribosomal protein S7"/>
    <property type="match status" value="1"/>
</dbReference>
<dbReference type="Gene3D" id="1.10.455.10">
    <property type="entry name" value="Ribosomal protein S7 domain"/>
    <property type="match status" value="1"/>
</dbReference>
<dbReference type="HAMAP" id="MF_00480_B">
    <property type="entry name" value="Ribosomal_uS7_B"/>
    <property type="match status" value="1"/>
</dbReference>
<dbReference type="InterPro" id="IPR000235">
    <property type="entry name" value="Ribosomal_uS7"/>
</dbReference>
<dbReference type="InterPro" id="IPR005717">
    <property type="entry name" value="Ribosomal_uS7_bac/org-type"/>
</dbReference>
<dbReference type="InterPro" id="IPR020606">
    <property type="entry name" value="Ribosomal_uS7_CS"/>
</dbReference>
<dbReference type="InterPro" id="IPR023798">
    <property type="entry name" value="Ribosomal_uS7_dom"/>
</dbReference>
<dbReference type="InterPro" id="IPR036823">
    <property type="entry name" value="Ribosomal_uS7_dom_sf"/>
</dbReference>
<dbReference type="NCBIfam" id="TIGR01029">
    <property type="entry name" value="rpsG_bact"/>
    <property type="match status" value="1"/>
</dbReference>
<dbReference type="PANTHER" id="PTHR11205">
    <property type="entry name" value="RIBOSOMAL PROTEIN S7"/>
    <property type="match status" value="1"/>
</dbReference>
<dbReference type="Pfam" id="PF00177">
    <property type="entry name" value="Ribosomal_S7"/>
    <property type="match status" value="1"/>
</dbReference>
<dbReference type="PIRSF" id="PIRSF002122">
    <property type="entry name" value="RPS7p_RPS7a_RPS5e_RPS7o"/>
    <property type="match status" value="1"/>
</dbReference>
<dbReference type="SUPFAM" id="SSF47973">
    <property type="entry name" value="Ribosomal protein S7"/>
    <property type="match status" value="1"/>
</dbReference>
<dbReference type="PROSITE" id="PS00052">
    <property type="entry name" value="RIBOSOMAL_S7"/>
    <property type="match status" value="1"/>
</dbReference>
<sequence>MSRRGTAEEKTAKSDPIYRNRLVNMLVNRILKHGKKSLAYQILYRAVKKIQQKTETNPLSVLRQAIRGVTPDIAVKARRVGGSTHQVPIEIGSTQGKALAIRWLLGASRKRPGRNMAFKLSSELVDAAKGSGDAIRKKEETHRMAEANRAFAHFR</sequence>
<reference key="1">
    <citation type="submission" date="2002-09" db="EMBL/GenBank/DDBJ databases">
        <title>Phylogenetic relationships among the major lineages of Asparagales based on a large chloroplast data set.</title>
        <authorList>
            <person name="McPherson M.A."/>
            <person name="Rai H.S."/>
            <person name="Wong W.A."/>
            <person name="Graham S.W."/>
        </authorList>
    </citation>
    <scope>NUCLEOTIDE SEQUENCE [GENOMIC DNA]</scope>
</reference>
<proteinExistence type="inferred from homology"/>
<evidence type="ECO:0000250" key="1"/>
<evidence type="ECO:0000305" key="2"/>
<name>RR7_YUCGL</name>